<feature type="chain" id="PRO_0000377347" description="tRNA dimethylallyltransferase">
    <location>
        <begin position="1"/>
        <end position="340"/>
    </location>
</feature>
<feature type="region of interest" description="Disordered" evidence="2">
    <location>
        <begin position="1"/>
        <end position="25"/>
    </location>
</feature>
<feature type="region of interest" description="Interaction with substrate tRNA" evidence="1">
    <location>
        <begin position="56"/>
        <end position="59"/>
    </location>
</feature>
<feature type="binding site" evidence="1">
    <location>
        <begin position="31"/>
        <end position="38"/>
    </location>
    <ligand>
        <name>ATP</name>
        <dbReference type="ChEBI" id="CHEBI:30616"/>
    </ligand>
</feature>
<feature type="binding site" evidence="1">
    <location>
        <begin position="33"/>
        <end position="38"/>
    </location>
    <ligand>
        <name>substrate</name>
    </ligand>
</feature>
<feature type="site" description="Interaction with substrate tRNA" evidence="1">
    <location>
        <position position="122"/>
    </location>
</feature>
<keyword id="KW-0067">ATP-binding</keyword>
<keyword id="KW-0460">Magnesium</keyword>
<keyword id="KW-0547">Nucleotide-binding</keyword>
<keyword id="KW-0808">Transferase</keyword>
<keyword id="KW-0819">tRNA processing</keyword>
<name>MIAA_SYNJA</name>
<accession>Q2JY05</accession>
<dbReference type="EC" id="2.5.1.75" evidence="1"/>
<dbReference type="EMBL" id="CP000239">
    <property type="protein sequence ID" value="ABC98312.1"/>
    <property type="molecule type" value="Genomic_DNA"/>
</dbReference>
<dbReference type="RefSeq" id="WP_011429004.1">
    <property type="nucleotide sequence ID" value="NC_007775.1"/>
</dbReference>
<dbReference type="SMR" id="Q2JY05"/>
<dbReference type="STRING" id="321327.CYA_0081"/>
<dbReference type="KEGG" id="cya:CYA_0081"/>
<dbReference type="eggNOG" id="COG0324">
    <property type="taxonomic scope" value="Bacteria"/>
</dbReference>
<dbReference type="HOGENOM" id="CLU_032616_0_1_3"/>
<dbReference type="OrthoDB" id="9776390at2"/>
<dbReference type="Proteomes" id="UP000008818">
    <property type="component" value="Chromosome"/>
</dbReference>
<dbReference type="GO" id="GO:0005524">
    <property type="term" value="F:ATP binding"/>
    <property type="evidence" value="ECO:0007669"/>
    <property type="project" value="UniProtKB-UniRule"/>
</dbReference>
<dbReference type="GO" id="GO:0052381">
    <property type="term" value="F:tRNA dimethylallyltransferase activity"/>
    <property type="evidence" value="ECO:0007669"/>
    <property type="project" value="UniProtKB-UniRule"/>
</dbReference>
<dbReference type="GO" id="GO:0006400">
    <property type="term" value="P:tRNA modification"/>
    <property type="evidence" value="ECO:0007669"/>
    <property type="project" value="TreeGrafter"/>
</dbReference>
<dbReference type="Gene3D" id="1.10.20.140">
    <property type="match status" value="1"/>
</dbReference>
<dbReference type="Gene3D" id="3.40.50.300">
    <property type="entry name" value="P-loop containing nucleotide triphosphate hydrolases"/>
    <property type="match status" value="1"/>
</dbReference>
<dbReference type="HAMAP" id="MF_00185">
    <property type="entry name" value="IPP_trans"/>
    <property type="match status" value="1"/>
</dbReference>
<dbReference type="InterPro" id="IPR039657">
    <property type="entry name" value="Dimethylallyltransferase"/>
</dbReference>
<dbReference type="InterPro" id="IPR018022">
    <property type="entry name" value="IPT"/>
</dbReference>
<dbReference type="InterPro" id="IPR027417">
    <property type="entry name" value="P-loop_NTPase"/>
</dbReference>
<dbReference type="NCBIfam" id="TIGR00174">
    <property type="entry name" value="miaA"/>
    <property type="match status" value="1"/>
</dbReference>
<dbReference type="PANTHER" id="PTHR11088">
    <property type="entry name" value="TRNA DIMETHYLALLYLTRANSFERASE"/>
    <property type="match status" value="1"/>
</dbReference>
<dbReference type="PANTHER" id="PTHR11088:SF60">
    <property type="entry name" value="TRNA DIMETHYLALLYLTRANSFERASE"/>
    <property type="match status" value="1"/>
</dbReference>
<dbReference type="Pfam" id="PF01715">
    <property type="entry name" value="IPPT"/>
    <property type="match status" value="1"/>
</dbReference>
<dbReference type="SUPFAM" id="SSF52540">
    <property type="entry name" value="P-loop containing nucleoside triphosphate hydrolases"/>
    <property type="match status" value="2"/>
</dbReference>
<evidence type="ECO:0000255" key="1">
    <source>
        <dbReference type="HAMAP-Rule" id="MF_00185"/>
    </source>
</evidence>
<evidence type="ECO:0000256" key="2">
    <source>
        <dbReference type="SAM" id="MobiDB-lite"/>
    </source>
</evidence>
<comment type="function">
    <text evidence="1">Catalyzes the transfer of a dimethylallyl group onto the adenine at position 37 in tRNAs that read codons beginning with uridine, leading to the formation of N6-(dimethylallyl)adenosine (i(6)A).</text>
</comment>
<comment type="catalytic activity">
    <reaction evidence="1">
        <text>adenosine(37) in tRNA + dimethylallyl diphosphate = N(6)-dimethylallyladenosine(37) in tRNA + diphosphate</text>
        <dbReference type="Rhea" id="RHEA:26482"/>
        <dbReference type="Rhea" id="RHEA-COMP:10162"/>
        <dbReference type="Rhea" id="RHEA-COMP:10375"/>
        <dbReference type="ChEBI" id="CHEBI:33019"/>
        <dbReference type="ChEBI" id="CHEBI:57623"/>
        <dbReference type="ChEBI" id="CHEBI:74411"/>
        <dbReference type="ChEBI" id="CHEBI:74415"/>
        <dbReference type="EC" id="2.5.1.75"/>
    </reaction>
</comment>
<comment type="cofactor">
    <cofactor evidence="1">
        <name>Mg(2+)</name>
        <dbReference type="ChEBI" id="CHEBI:18420"/>
    </cofactor>
</comment>
<comment type="subunit">
    <text evidence="1">Monomer.</text>
</comment>
<comment type="similarity">
    <text evidence="1">Belongs to the IPP transferase family.</text>
</comment>
<gene>
    <name evidence="1" type="primary">miaA</name>
    <name type="ordered locus">CYA_0081</name>
</gene>
<sequence length="340" mass="37753">MDQNRSPNGRDCREPPSPSSTARPGLVVIAGPTATGKSRQALLLAQRLGSPLLNADSRQVYREFDIGTAKPTPAERALWPHELIDFVDPRHTYTVAEFQQAAQARIAAAHRQGQTPILVGGTGLYIQSITAGLGIPAVPPQPQLRAQLETWPPEIRYAWLQQLDPVAAGQIHPHDEVRTLRALEIIYTTGKPASYLRQAHPPDYPILLLGLHCPMPRLEQRIARRTAEMLAAGWIEEVKTLRQRYGPDLPLLQTLGYAEIGAYLEGRIPAAELQPLIVRRTRQFAKRQMTWFRAMPGIQWLDCEAEDLPEQIWKRVTAWMAAQTSAGTTPAVAARPPADP</sequence>
<reference key="1">
    <citation type="journal article" date="2007" name="ISME J.">
        <title>Population level functional diversity in a microbial community revealed by comparative genomic and metagenomic analyses.</title>
        <authorList>
            <person name="Bhaya D."/>
            <person name="Grossman A.R."/>
            <person name="Steunou A.-S."/>
            <person name="Khuri N."/>
            <person name="Cohan F.M."/>
            <person name="Hamamura N."/>
            <person name="Melendrez M.C."/>
            <person name="Bateson M.M."/>
            <person name="Ward D.M."/>
            <person name="Heidelberg J.F."/>
        </authorList>
    </citation>
    <scope>NUCLEOTIDE SEQUENCE [LARGE SCALE GENOMIC DNA]</scope>
    <source>
        <strain>JA-3-3Ab</strain>
    </source>
</reference>
<organism>
    <name type="scientific">Synechococcus sp. (strain JA-3-3Ab)</name>
    <name type="common">Cyanobacteria bacterium Yellowstone A-Prime</name>
    <dbReference type="NCBI Taxonomy" id="321327"/>
    <lineage>
        <taxon>Bacteria</taxon>
        <taxon>Bacillati</taxon>
        <taxon>Cyanobacteriota</taxon>
        <taxon>Cyanophyceae</taxon>
        <taxon>Synechococcales</taxon>
        <taxon>Synechococcaceae</taxon>
        <taxon>Synechococcus</taxon>
    </lineage>
</organism>
<protein>
    <recommendedName>
        <fullName evidence="1">tRNA dimethylallyltransferase</fullName>
        <ecNumber evidence="1">2.5.1.75</ecNumber>
    </recommendedName>
    <alternativeName>
        <fullName evidence="1">Dimethylallyl diphosphate:tRNA dimethylallyltransferase</fullName>
        <shortName evidence="1">DMAPP:tRNA dimethylallyltransferase</shortName>
        <shortName evidence="1">DMATase</shortName>
    </alternativeName>
    <alternativeName>
        <fullName evidence="1">Isopentenyl-diphosphate:tRNA isopentenyltransferase</fullName>
        <shortName evidence="1">IPP transferase</shortName>
        <shortName evidence="1">IPPT</shortName>
        <shortName evidence="1">IPTase</shortName>
    </alternativeName>
</protein>
<proteinExistence type="inferred from homology"/>